<dbReference type="EMBL" id="CP000255">
    <property type="protein sequence ID" value="ABD21686.1"/>
    <property type="molecule type" value="Genomic_DNA"/>
</dbReference>
<dbReference type="RefSeq" id="WP_001058111.1">
    <property type="nucleotide sequence ID" value="NZ_CP027476.1"/>
</dbReference>
<dbReference type="KEGG" id="saa:SAUSA300_2020"/>
<dbReference type="HOGENOM" id="CLU_123820_0_0_9"/>
<dbReference type="OMA" id="LVHYHLH"/>
<dbReference type="Proteomes" id="UP000001939">
    <property type="component" value="Chromosome"/>
</dbReference>
<dbReference type="GO" id="GO:0005737">
    <property type="term" value="C:cytoplasm"/>
    <property type="evidence" value="ECO:0007669"/>
    <property type="project" value="UniProtKB-SubCell"/>
</dbReference>
<dbReference type="GO" id="GO:0008270">
    <property type="term" value="F:zinc ion binding"/>
    <property type="evidence" value="ECO:0007669"/>
    <property type="project" value="UniProtKB-UniRule"/>
</dbReference>
<dbReference type="GO" id="GO:0006950">
    <property type="term" value="P:response to stress"/>
    <property type="evidence" value="ECO:0007669"/>
    <property type="project" value="UniProtKB-ARBA"/>
</dbReference>
<dbReference type="HAMAP" id="MF_00745">
    <property type="entry name" value="SprT_like"/>
    <property type="match status" value="1"/>
</dbReference>
<dbReference type="InterPro" id="IPR006640">
    <property type="entry name" value="SprT-like_domain"/>
</dbReference>
<dbReference type="InterPro" id="IPR035240">
    <property type="entry name" value="SprT_Zn_ribbon"/>
</dbReference>
<dbReference type="InterPro" id="IPR023524">
    <property type="entry name" value="Uncharacterised_SprT-like"/>
</dbReference>
<dbReference type="NCBIfam" id="NF003339">
    <property type="entry name" value="PRK04351.1"/>
    <property type="match status" value="1"/>
</dbReference>
<dbReference type="Pfam" id="PF10263">
    <property type="entry name" value="SprT-like"/>
    <property type="match status" value="1"/>
</dbReference>
<dbReference type="Pfam" id="PF17283">
    <property type="entry name" value="Zn_ribbon_SprT"/>
    <property type="match status" value="1"/>
</dbReference>
<dbReference type="SMART" id="SM00731">
    <property type="entry name" value="SprT"/>
    <property type="match status" value="1"/>
</dbReference>
<gene>
    <name type="ordered locus">SAUSA300_2020</name>
</gene>
<reference key="1">
    <citation type="journal article" date="2006" name="Lancet">
        <title>Complete genome sequence of USA300, an epidemic clone of community-acquired meticillin-resistant Staphylococcus aureus.</title>
        <authorList>
            <person name="Diep B.A."/>
            <person name="Gill S.R."/>
            <person name="Chang R.F."/>
            <person name="Phan T.H."/>
            <person name="Chen J.H."/>
            <person name="Davidson M.G."/>
            <person name="Lin F."/>
            <person name="Lin J."/>
            <person name="Carleton H.A."/>
            <person name="Mongodin E.F."/>
            <person name="Sensabaugh G.F."/>
            <person name="Perdreau-Remington F."/>
        </authorList>
    </citation>
    <scope>NUCLEOTIDE SEQUENCE [LARGE SCALE GENOMIC DNA]</scope>
    <source>
        <strain>USA300</strain>
    </source>
</reference>
<keyword id="KW-0963">Cytoplasm</keyword>
<keyword id="KW-0479">Metal-binding</keyword>
<keyword id="KW-0862">Zinc</keyword>
<protein>
    <recommendedName>
        <fullName evidence="1">Protein SprT-like</fullName>
    </recommendedName>
</protein>
<evidence type="ECO:0000255" key="1">
    <source>
        <dbReference type="HAMAP-Rule" id="MF_00745"/>
    </source>
</evidence>
<accession>Q2FF62</accession>
<proteinExistence type="inferred from homology"/>
<feature type="chain" id="PRO_1000046515" description="Protein SprT-like">
    <location>
        <begin position="1"/>
        <end position="151"/>
    </location>
</feature>
<feature type="domain" description="SprT-like" evidence="1">
    <location>
        <begin position="6"/>
        <end position="147"/>
    </location>
</feature>
<feature type="active site" evidence="1">
    <location>
        <position position="68"/>
    </location>
</feature>
<feature type="binding site" evidence="1">
    <location>
        <position position="67"/>
    </location>
    <ligand>
        <name>Zn(2+)</name>
        <dbReference type="ChEBI" id="CHEBI:29105"/>
    </ligand>
</feature>
<feature type="binding site" evidence="1">
    <location>
        <position position="71"/>
    </location>
    <ligand>
        <name>Zn(2+)</name>
        <dbReference type="ChEBI" id="CHEBI:29105"/>
    </ligand>
</feature>
<organism>
    <name type="scientific">Staphylococcus aureus (strain USA300)</name>
    <dbReference type="NCBI Taxonomy" id="367830"/>
    <lineage>
        <taxon>Bacteria</taxon>
        <taxon>Bacillati</taxon>
        <taxon>Bacillota</taxon>
        <taxon>Bacilli</taxon>
        <taxon>Bacillales</taxon>
        <taxon>Staphylococcaceae</taxon>
        <taxon>Staphylococcus</taxon>
    </lineage>
</organism>
<comment type="cofactor">
    <cofactor evidence="1">
        <name>Zn(2+)</name>
        <dbReference type="ChEBI" id="CHEBI:29105"/>
    </cofactor>
    <text evidence="1">Binds 1 zinc ion.</text>
</comment>
<comment type="subcellular location">
    <subcellularLocation>
        <location evidence="1">Cytoplasm</location>
    </subcellularLocation>
</comment>
<comment type="similarity">
    <text evidence="1">Belongs to the SprT family.</text>
</comment>
<sequence>MNNDKLQRMVENLSEEKFGRTFRHCAYFNKRLRTTGGRYLLKSHDIEINPKQYEHYGEDAVVKIILHELCHYHLHIAGKGYQHKDQDFKRLSQQVGAPRFCNSIESYQQRANYEYYCTKCHAKYIRIRKVDTNRMRCGHCNGKLRMKRQLK</sequence>
<name>SPRTL_STAA3</name>